<accession>O32182</accession>
<keyword id="KW-1003">Cell membrane</keyword>
<keyword id="KW-0472">Membrane</keyword>
<keyword id="KW-1185">Reference proteome</keyword>
<keyword id="KW-0812">Transmembrane</keyword>
<keyword id="KW-1133">Transmembrane helix</keyword>
<keyword id="KW-0813">Transport</keyword>
<protein>
    <recommendedName>
        <fullName evidence="3">Multidrug transporter protein MdtP</fullName>
    </recommendedName>
    <alternativeName>
        <fullName evidence="4">MFS-type transporter MdtP</fullName>
    </alternativeName>
</protein>
<dbReference type="EMBL" id="AL009126">
    <property type="protein sequence ID" value="CAB15277.1"/>
    <property type="molecule type" value="Genomic_DNA"/>
</dbReference>
<dbReference type="PIR" id="A70022">
    <property type="entry name" value="A70022"/>
</dbReference>
<dbReference type="RefSeq" id="NP_391167.1">
    <property type="nucleotide sequence ID" value="NC_000964.3"/>
</dbReference>
<dbReference type="RefSeq" id="WP_003228559.1">
    <property type="nucleotide sequence ID" value="NZ_OZ025638.1"/>
</dbReference>
<dbReference type="SMR" id="O32182"/>
<dbReference type="FunCoup" id="O32182">
    <property type="interactions" value="421"/>
</dbReference>
<dbReference type="STRING" id="224308.BSU32880"/>
<dbReference type="TCDB" id="2.A.1.3.33">
    <property type="family name" value="the major facilitator superfamily (mfs)"/>
</dbReference>
<dbReference type="PaxDb" id="224308-BSU32880"/>
<dbReference type="EnsemblBacteria" id="CAB15277">
    <property type="protein sequence ID" value="CAB15277"/>
    <property type="gene ID" value="BSU_32880"/>
</dbReference>
<dbReference type="GeneID" id="937088"/>
<dbReference type="KEGG" id="bsu:BSU32880"/>
<dbReference type="PATRIC" id="fig|224308.43.peg.3443"/>
<dbReference type="eggNOG" id="COG0477">
    <property type="taxonomic scope" value="Bacteria"/>
</dbReference>
<dbReference type="InParanoid" id="O32182"/>
<dbReference type="OrthoDB" id="9807274at2"/>
<dbReference type="PhylomeDB" id="O32182"/>
<dbReference type="BioCyc" id="BSUB:BSU32880-MONOMER"/>
<dbReference type="Proteomes" id="UP000001570">
    <property type="component" value="Chromosome"/>
</dbReference>
<dbReference type="GO" id="GO:0005886">
    <property type="term" value="C:plasma membrane"/>
    <property type="evidence" value="ECO:0000318"/>
    <property type="project" value="GO_Central"/>
</dbReference>
<dbReference type="GO" id="GO:0022857">
    <property type="term" value="F:transmembrane transporter activity"/>
    <property type="evidence" value="ECO:0000318"/>
    <property type="project" value="GO_Central"/>
</dbReference>
<dbReference type="GO" id="GO:0055085">
    <property type="term" value="P:transmembrane transport"/>
    <property type="evidence" value="ECO:0000318"/>
    <property type="project" value="GO_Central"/>
</dbReference>
<dbReference type="CDD" id="cd17502">
    <property type="entry name" value="MFS_Azr1_MDR_like"/>
    <property type="match status" value="1"/>
</dbReference>
<dbReference type="FunFam" id="1.20.1720.10:FF:000017">
    <property type="entry name" value="Drug resistance MFS transporter"/>
    <property type="match status" value="1"/>
</dbReference>
<dbReference type="FunFam" id="1.20.1250.20:FF:000772">
    <property type="entry name" value="Multidrug efflux transporter MdtP"/>
    <property type="match status" value="1"/>
</dbReference>
<dbReference type="Gene3D" id="1.20.1250.20">
    <property type="entry name" value="MFS general substrate transporter like domains"/>
    <property type="match status" value="1"/>
</dbReference>
<dbReference type="Gene3D" id="1.20.1720.10">
    <property type="entry name" value="Multidrug resistance protein D"/>
    <property type="match status" value="1"/>
</dbReference>
<dbReference type="InterPro" id="IPR004638">
    <property type="entry name" value="EmrB-like"/>
</dbReference>
<dbReference type="InterPro" id="IPR011701">
    <property type="entry name" value="MFS"/>
</dbReference>
<dbReference type="InterPro" id="IPR020846">
    <property type="entry name" value="MFS_dom"/>
</dbReference>
<dbReference type="InterPro" id="IPR036259">
    <property type="entry name" value="MFS_trans_sf"/>
</dbReference>
<dbReference type="InterPro" id="IPR005829">
    <property type="entry name" value="Sugar_transporter_CS"/>
</dbReference>
<dbReference type="NCBIfam" id="TIGR00711">
    <property type="entry name" value="efflux_EmrB"/>
    <property type="match status" value="1"/>
</dbReference>
<dbReference type="PANTHER" id="PTHR23501:SF197">
    <property type="entry name" value="COMD"/>
    <property type="match status" value="1"/>
</dbReference>
<dbReference type="PANTHER" id="PTHR23501">
    <property type="entry name" value="MAJOR FACILITATOR SUPERFAMILY"/>
    <property type="match status" value="1"/>
</dbReference>
<dbReference type="Pfam" id="PF07690">
    <property type="entry name" value="MFS_1"/>
    <property type="match status" value="1"/>
</dbReference>
<dbReference type="PRINTS" id="PR01036">
    <property type="entry name" value="TCRTETB"/>
</dbReference>
<dbReference type="SUPFAM" id="SSF103473">
    <property type="entry name" value="MFS general substrate transporter"/>
    <property type="match status" value="1"/>
</dbReference>
<dbReference type="PROSITE" id="PS50850">
    <property type="entry name" value="MFS"/>
    <property type="match status" value="1"/>
</dbReference>
<dbReference type="PROSITE" id="PS00216">
    <property type="entry name" value="SUGAR_TRANSPORT_1"/>
    <property type="match status" value="1"/>
</dbReference>
<feature type="chain" id="PRO_0000351512" description="Multidrug transporter protein MdtP">
    <location>
        <begin position="1"/>
        <end position="541"/>
    </location>
</feature>
<feature type="transmembrane region" description="Helical" evidence="1">
    <location>
        <begin position="14"/>
        <end position="34"/>
    </location>
</feature>
<feature type="transmembrane region" description="Helical" evidence="1">
    <location>
        <begin position="40"/>
        <end position="60"/>
    </location>
</feature>
<feature type="transmembrane region" description="Helical" evidence="1">
    <location>
        <begin position="79"/>
        <end position="99"/>
    </location>
</feature>
<feature type="transmembrane region" description="Helical" evidence="1">
    <location>
        <begin position="112"/>
        <end position="132"/>
    </location>
</feature>
<feature type="transmembrane region" description="Helical" evidence="1">
    <location>
        <begin position="141"/>
        <end position="161"/>
    </location>
</feature>
<feature type="transmembrane region" description="Helical" evidence="1">
    <location>
        <begin position="168"/>
        <end position="188"/>
    </location>
</feature>
<feature type="transmembrane region" description="Helical" evidence="1">
    <location>
        <begin position="201"/>
        <end position="221"/>
    </location>
</feature>
<feature type="transmembrane region" description="Helical" evidence="1">
    <location>
        <begin position="229"/>
        <end position="249"/>
    </location>
</feature>
<feature type="transmembrane region" description="Helical" evidence="1">
    <location>
        <begin position="273"/>
        <end position="293"/>
    </location>
</feature>
<feature type="transmembrane region" description="Helical" evidence="1">
    <location>
        <begin position="307"/>
        <end position="327"/>
    </location>
</feature>
<feature type="transmembrane region" description="Helical" evidence="1">
    <location>
        <begin position="329"/>
        <end position="349"/>
    </location>
</feature>
<feature type="transmembrane region" description="Helical" evidence="1">
    <location>
        <begin position="359"/>
        <end position="379"/>
    </location>
</feature>
<feature type="transmembrane region" description="Helical" evidence="1">
    <location>
        <begin position="401"/>
        <end position="420"/>
    </location>
</feature>
<feature type="transmembrane region" description="Helical" evidence="1">
    <location>
        <begin position="492"/>
        <end position="512"/>
    </location>
</feature>
<comment type="function">
    <text evidence="2">Multidrug efflux transporter (PubMed:19286808). Contributes to resistance to several antibiotics, including fusidic acid, novobiocin, streptomycin and actinomycin, possibly by pumping these structurally unrelated antibiotics out of cells (PubMed:19286808).</text>
</comment>
<comment type="subcellular location">
    <subcellularLocation>
        <location evidence="4">Cell membrane</location>
        <topology evidence="1">Multi-pass membrane protein</topology>
    </subcellularLocation>
</comment>
<comment type="induction">
    <text evidence="2">Part of the mdtRP (yusOP) operon (PubMed:19286808). Expression is repressed by the HTH-type transcriptional repressor MdtR (PubMed:19286808). Induced by fusidic acid (PubMed:19286808). The mdtRP expression is decreased during stationary phase, even in mdtR mutants (PubMed:19286808).</text>
</comment>
<comment type="disruption phenotype">
    <text evidence="2">Disruption of the gene completely abolishes the multidrug resistance observed in the mdtR mutant.</text>
</comment>
<comment type="similarity">
    <text evidence="4">Belongs to the major facilitator superfamily. EmrB family.</text>
</comment>
<proteinExistence type="evidence at transcript level"/>
<reference key="1">
    <citation type="journal article" date="1997" name="Nature">
        <title>The complete genome sequence of the Gram-positive bacterium Bacillus subtilis.</title>
        <authorList>
            <person name="Kunst F."/>
            <person name="Ogasawara N."/>
            <person name="Moszer I."/>
            <person name="Albertini A.M."/>
            <person name="Alloni G."/>
            <person name="Azevedo V."/>
            <person name="Bertero M.G."/>
            <person name="Bessieres P."/>
            <person name="Bolotin A."/>
            <person name="Borchert S."/>
            <person name="Borriss R."/>
            <person name="Boursier L."/>
            <person name="Brans A."/>
            <person name="Braun M."/>
            <person name="Brignell S.C."/>
            <person name="Bron S."/>
            <person name="Brouillet S."/>
            <person name="Bruschi C.V."/>
            <person name="Caldwell B."/>
            <person name="Capuano V."/>
            <person name="Carter N.M."/>
            <person name="Choi S.-K."/>
            <person name="Codani J.-J."/>
            <person name="Connerton I.F."/>
            <person name="Cummings N.J."/>
            <person name="Daniel R.A."/>
            <person name="Denizot F."/>
            <person name="Devine K.M."/>
            <person name="Duesterhoeft A."/>
            <person name="Ehrlich S.D."/>
            <person name="Emmerson P.T."/>
            <person name="Entian K.-D."/>
            <person name="Errington J."/>
            <person name="Fabret C."/>
            <person name="Ferrari E."/>
            <person name="Foulger D."/>
            <person name="Fritz C."/>
            <person name="Fujita M."/>
            <person name="Fujita Y."/>
            <person name="Fuma S."/>
            <person name="Galizzi A."/>
            <person name="Galleron N."/>
            <person name="Ghim S.-Y."/>
            <person name="Glaser P."/>
            <person name="Goffeau A."/>
            <person name="Golightly E.J."/>
            <person name="Grandi G."/>
            <person name="Guiseppi G."/>
            <person name="Guy B.J."/>
            <person name="Haga K."/>
            <person name="Haiech J."/>
            <person name="Harwood C.R."/>
            <person name="Henaut A."/>
            <person name="Hilbert H."/>
            <person name="Holsappel S."/>
            <person name="Hosono S."/>
            <person name="Hullo M.-F."/>
            <person name="Itaya M."/>
            <person name="Jones L.-M."/>
            <person name="Joris B."/>
            <person name="Karamata D."/>
            <person name="Kasahara Y."/>
            <person name="Klaerr-Blanchard M."/>
            <person name="Klein C."/>
            <person name="Kobayashi Y."/>
            <person name="Koetter P."/>
            <person name="Koningstein G."/>
            <person name="Krogh S."/>
            <person name="Kumano M."/>
            <person name="Kurita K."/>
            <person name="Lapidus A."/>
            <person name="Lardinois S."/>
            <person name="Lauber J."/>
            <person name="Lazarevic V."/>
            <person name="Lee S.-M."/>
            <person name="Levine A."/>
            <person name="Liu H."/>
            <person name="Masuda S."/>
            <person name="Mauel C."/>
            <person name="Medigue C."/>
            <person name="Medina N."/>
            <person name="Mellado R.P."/>
            <person name="Mizuno M."/>
            <person name="Moestl D."/>
            <person name="Nakai S."/>
            <person name="Noback M."/>
            <person name="Noone D."/>
            <person name="O'Reilly M."/>
            <person name="Ogawa K."/>
            <person name="Ogiwara A."/>
            <person name="Oudega B."/>
            <person name="Park S.-H."/>
            <person name="Parro V."/>
            <person name="Pohl T.M."/>
            <person name="Portetelle D."/>
            <person name="Porwollik S."/>
            <person name="Prescott A.M."/>
            <person name="Presecan E."/>
            <person name="Pujic P."/>
            <person name="Purnelle B."/>
            <person name="Rapoport G."/>
            <person name="Rey M."/>
            <person name="Reynolds S."/>
            <person name="Rieger M."/>
            <person name="Rivolta C."/>
            <person name="Rocha E."/>
            <person name="Roche B."/>
            <person name="Rose M."/>
            <person name="Sadaie Y."/>
            <person name="Sato T."/>
            <person name="Scanlan E."/>
            <person name="Schleich S."/>
            <person name="Schroeter R."/>
            <person name="Scoffone F."/>
            <person name="Sekiguchi J."/>
            <person name="Sekowska A."/>
            <person name="Seror S.J."/>
            <person name="Serror P."/>
            <person name="Shin B.-S."/>
            <person name="Soldo B."/>
            <person name="Sorokin A."/>
            <person name="Tacconi E."/>
            <person name="Takagi T."/>
            <person name="Takahashi H."/>
            <person name="Takemaru K."/>
            <person name="Takeuchi M."/>
            <person name="Tamakoshi A."/>
            <person name="Tanaka T."/>
            <person name="Terpstra P."/>
            <person name="Tognoni A."/>
            <person name="Tosato V."/>
            <person name="Uchiyama S."/>
            <person name="Vandenbol M."/>
            <person name="Vannier F."/>
            <person name="Vassarotti A."/>
            <person name="Viari A."/>
            <person name="Wambutt R."/>
            <person name="Wedler E."/>
            <person name="Wedler H."/>
            <person name="Weitzenegger T."/>
            <person name="Winters P."/>
            <person name="Wipat A."/>
            <person name="Yamamoto H."/>
            <person name="Yamane K."/>
            <person name="Yasumoto K."/>
            <person name="Yata K."/>
            <person name="Yoshida K."/>
            <person name="Yoshikawa H.-F."/>
            <person name="Zumstein E."/>
            <person name="Yoshikawa H."/>
            <person name="Danchin A."/>
        </authorList>
    </citation>
    <scope>NUCLEOTIDE SEQUENCE [LARGE SCALE GENOMIC DNA]</scope>
    <source>
        <strain>168</strain>
    </source>
</reference>
<reference key="2">
    <citation type="journal article" date="2009" name="J. Bacteriol.">
        <title>Identification and characterization of a novel multidrug resistance operon, mdtRP (yusOP), of Bacillus subtilis.</title>
        <authorList>
            <person name="Kim J.Y."/>
            <person name="Inaoka T."/>
            <person name="Hirooka K."/>
            <person name="Matsuoka H."/>
            <person name="Murata M."/>
            <person name="Ohki R."/>
            <person name="Adachi Y."/>
            <person name="Fujita Y."/>
            <person name="Ochi K."/>
        </authorList>
    </citation>
    <scope>FUNCTION</scope>
    <scope>INDUCTION</scope>
    <scope>DISRUPTION PHENOTYPE</scope>
    <source>
        <strain>168</strain>
    </source>
</reference>
<name>MDTP_BACSU</name>
<organism>
    <name type="scientific">Bacillus subtilis (strain 168)</name>
    <dbReference type="NCBI Taxonomy" id="224308"/>
    <lineage>
        <taxon>Bacteria</taxon>
        <taxon>Bacillati</taxon>
        <taxon>Bacillota</taxon>
        <taxon>Bacilli</taxon>
        <taxon>Bacillales</taxon>
        <taxon>Bacillaceae</taxon>
        <taxon>Bacillus</taxon>
    </lineage>
</organism>
<gene>
    <name evidence="3" type="primary">mdtP</name>
    <name type="synonym">yusP</name>
    <name type="ordered locus">BSU32880</name>
</gene>
<sequence>MKMSKEGKQSKRTLLITGLIIAMFFSALDGTIVGTAMPKIVGDLGGLSMMTWLTTAYLLTSTTIVPIAGKLADLLGRRIVYVSGLIIFMAASALCGMANNMTELIIFRGLQGIGGGIMMPMAMIVIGDLFTGKQRAKFQGVFGAIYGLASVIGPQIGGWIVDSLNWKWVFYINLPVGIIAVIFIARGLQGRQQTGPINFDIAGIFTMIVGVVSLLLALSFGGKDYAWDSWQILGLFALALIGIVSFIIVESKAKEPILPMYLFKNRTFTFLNLIGFFMSIGMFGAITFVPFFMQGIVGVSASESGTIMTPMMISMIITSIIGGQLVYKIGIKPQIITGMLVMAGGFLLLTTLDLDTSKLVATSFMAIIGLGMGLVMPILTLALQESFSKEELGVVTSSSQFFRSIGGTFGITMLGAVMNARSGNLLTDKLVPYLDSLPAQASSFAAQLKGMIDTNPQGLLQSLFSPDAVKQIPAAFSSHIVPILKTSLMDSLHSVFYTGLIFIAVGAVFTLFLKPIKLSNKKAEDQQEKEKAAKAVESPSH</sequence>
<evidence type="ECO:0000255" key="1"/>
<evidence type="ECO:0000269" key="2">
    <source>
    </source>
</evidence>
<evidence type="ECO:0000303" key="3">
    <source>
    </source>
</evidence>
<evidence type="ECO:0000305" key="4"/>